<comment type="function">
    <text evidence="4">Single-stranded DNA-binding protein required for the elongation during viral DNA replication by strand displacement. Displaced viral DNA strands are transiently coated with the ssDNA-binding protein and therefore protected againt nucleases. The latter is then probably removed by the replisome that performs lagging strand synthesis or during the events that lead up to the recombination process. Has helix-destabilizing activity since it removes secondary structure from the ssDNA in replicative intermediates.</text>
</comment>
<comment type="subunit">
    <text evidence="1">Hexamer.</text>
</comment>
<comment type="domain">
    <text evidence="2">The N-terminus is required for oligomerization.</text>
</comment>
<comment type="similarity">
    <text evidence="3">Belongs to the phi29likevirus single-strand-binding protein family.</text>
</comment>
<sequence>MSNELKQVEQTEEAVVVSETKDYIKVYENGKYRRKAKYQQLNSMSHRELTDEEEINIFNLLNGAEGSAVEMKRAVGSKVTIVDFITVPYTKIDEDTGVEENGVLTYLINENGEAIATSSKAVYFTLNRLLIQCGKHADGTWKRPIVEIISVKQTNGDGMDLKLVGFDKKK</sequence>
<feature type="chain" id="PRO_0000436076" description="Single-stranded DNA-binding protein">
    <location>
        <begin position="1"/>
        <end position="170"/>
    </location>
</feature>
<feature type="region of interest" description="Oligomerization" evidence="2">
    <location>
        <begin position="1"/>
        <end position="26"/>
    </location>
</feature>
<accession>Q9MCD0</accession>
<gene>
    <name evidence="5" type="primary">gene 5</name>
</gene>
<keyword id="KW-0235">DNA replication</keyword>
<keyword id="KW-0238">DNA-binding</keyword>
<keyword id="KW-0244">Early protein</keyword>
<keyword id="KW-1185">Reference proteome</keyword>
<keyword id="KW-1194">Viral DNA replication</keyword>
<dbReference type="EMBL" id="X96987">
    <property type="protein sequence ID" value="CAC21526.1"/>
    <property type="molecule type" value="Genomic_DNA"/>
</dbReference>
<dbReference type="RefSeq" id="NP_073688.1">
    <property type="nucleotide sequence ID" value="NC_002649.1"/>
</dbReference>
<dbReference type="GeneID" id="919894"/>
<dbReference type="KEGG" id="vg:919894"/>
<dbReference type="Proteomes" id="UP000002580">
    <property type="component" value="Segment"/>
</dbReference>
<dbReference type="GO" id="GO:0003677">
    <property type="term" value="F:DNA binding"/>
    <property type="evidence" value="ECO:0007669"/>
    <property type="project" value="UniProtKB-KW"/>
</dbReference>
<dbReference type="GO" id="GO:0006260">
    <property type="term" value="P:DNA replication"/>
    <property type="evidence" value="ECO:0007669"/>
    <property type="project" value="UniProtKB-KW"/>
</dbReference>
<dbReference type="GO" id="GO:0039693">
    <property type="term" value="P:viral DNA genome replication"/>
    <property type="evidence" value="ECO:0007669"/>
    <property type="project" value="UniProtKB-KW"/>
</dbReference>
<organismHost>
    <name type="scientific">Bacillus subtilis</name>
    <dbReference type="NCBI Taxonomy" id="1423"/>
</organismHost>
<reference evidence="5 6" key="1">
    <citation type="submission" date="1996-03" db="EMBL/GenBank/DDBJ databases">
        <title>The phi29 family of phages.</title>
        <authorList>
            <person name="Meijer W.J.J."/>
            <person name="Horcajadas J.A."/>
            <person name="Salas M."/>
        </authorList>
    </citation>
    <scope>NUCLEOTIDE SEQUENCE [LARGE SCALE GENOMIC DNA]</scope>
</reference>
<reference key="2">
    <citation type="journal article" date="2000" name="Nucleic Acids Res.">
        <title>Differential functional behavior of viral phi29, Nf and GA-1 SSB proteins.</title>
        <authorList>
            <person name="Gascon I."/>
            <person name="Lazaro J.M."/>
            <person name="Salas M."/>
        </authorList>
    </citation>
    <scope>FUNCTION</scope>
</reference>
<reference key="3">
    <citation type="journal article" date="2000" name="J. Mol. Biol.">
        <title>Structural and functional comparative study of the complexes formed by viral phi29, Nf and GA-1 SSB proteins with DNA.</title>
        <authorList>
            <person name="Gascon I."/>
            <person name="Gutierrez C."/>
            <person name="Salas M."/>
        </authorList>
    </citation>
    <scope>SUBUNIT</scope>
</reference>
<reference key="4">
    <citation type="journal article" date="2002" name="J. Biol. Chem.">
        <title>Importance of the N-terminal region of the phage GA-1 single-stranded DNA-binding protein for its self-interaction ability and functionality.</title>
        <authorList>
            <person name="Gascon I."/>
            <person name="Carrascosa J.L."/>
            <person name="Villar L."/>
            <person name="Lazaro J.M."/>
            <person name="Salas M."/>
        </authorList>
    </citation>
    <scope>DOMAIN</scope>
</reference>
<organism>
    <name type="scientific">Bacillus phage GA-1</name>
    <name type="common">Bacteriophage GA-1</name>
    <dbReference type="NCBI Taxonomy" id="2679898"/>
    <lineage>
        <taxon>Viruses</taxon>
        <taxon>Duplodnaviria</taxon>
        <taxon>Heunggongvirae</taxon>
        <taxon>Uroviricota</taxon>
        <taxon>Caudoviricetes</taxon>
        <taxon>Salasmaviridae</taxon>
        <taxon>Tatarstanvirinae</taxon>
        <taxon>Gaunavirus</taxon>
        <taxon>Gaunavirus GA1</taxon>
    </lineage>
</organism>
<evidence type="ECO:0000269" key="1">
    <source>
    </source>
</evidence>
<evidence type="ECO:0000269" key="2">
    <source>
    </source>
</evidence>
<evidence type="ECO:0000305" key="3"/>
<evidence type="ECO:0000305" key="4">
    <source>
    </source>
</evidence>
<evidence type="ECO:0000312" key="5">
    <source>
        <dbReference type="EMBL" id="CAC21526.1"/>
    </source>
</evidence>
<evidence type="ECO:0000312" key="6">
    <source>
        <dbReference type="Proteomes" id="UP000002580"/>
    </source>
</evidence>
<protein>
    <recommendedName>
        <fullName>Single-stranded DNA-binding protein</fullName>
        <shortName>SSB</shortName>
    </recommendedName>
    <alternativeName>
        <fullName>Gene product 5</fullName>
        <shortName>gp5</shortName>
    </alternativeName>
    <alternativeName>
        <fullName>Protein p5</fullName>
    </alternativeName>
</protein>
<proteinExistence type="evidence at protein level"/>
<name>SSB_BPGA1</name>